<comment type="function">
    <text evidence="3">Sesquiterpene cyclase; part of the gene cluster that mediates the biosynthesis of heptelidic acid (HA), a sesquiterpene lactone that acts as an inhibitor of glyceraldehyde-3-phosphatedehydrogenase (GAPDH) and a growth inhibitor of the salt-tolerant lactic acid bacteria in soy sauce brewing.</text>
</comment>
<comment type="cofactor">
    <cofactor evidence="2">
        <name>Mg(2+)</name>
        <dbReference type="ChEBI" id="CHEBI:18420"/>
    </cofactor>
    <text evidence="2">Binds 3 Mg(2+) ions per subunit.</text>
</comment>
<comment type="induction">
    <text evidence="3">The expression is positively regulated by the 2 cluster-specific transcription factors hepR and hepS.</text>
</comment>
<comment type="domain">
    <text evidence="2">The DDXX(D,E) motif is important for the catalytic activity, presumably through binding to Mg(2+).</text>
</comment>
<comment type="domain">
    <text evidence="5">The conserved (N,D)D(L,I,V)X(S,T)XXXE motif is characteristic to type I terpene cyclases that form an allylic cation through the release of the pyrophosphate group.</text>
</comment>
<comment type="disruption phenotype">
    <text evidence="3">Abolishes the production of heptelidic acid.</text>
</comment>
<comment type="similarity">
    <text evidence="5">Belongs to the terpene synthase family.</text>
</comment>
<accession>Q2U0K2</accession>
<sequence length="369" mass="42487">MSQSVVVNPRPALKAKLTKEPFSIPNLKPYYKAWPTAVNPDYPGLKVALEARIKNLYPPKKAAKLIQDDYALLSSMWWPRATADRLQTCTFWFLWLFTWDDEIDQSTSDLFIHIHKANDFRKESLEYVKFCLGVGDDETAKWDFQNNPPNRPLIRSLDVIGAHLQKVYNHDQIMTFVNEIDYYMGCQQREQKRKLTGRLPIVAEYLETRMGTSAVTSMLALNEFADGNDIPRDIMTDPKMISLWYEVNMNMSLSNDLLSLRKEIKHGDIDSMVPVLVSARGLTVRQAVKETEAEINRNIERFDQIADALLEEIKLTHPEKVDEVASYIVGCRYNQMANFLWSLTTTRYGLGDMVRDAEGRIPIVIENVN</sequence>
<reference key="1">
    <citation type="journal article" date="2005" name="Nature">
        <title>Genome sequencing and analysis of Aspergillus oryzae.</title>
        <authorList>
            <person name="Machida M."/>
            <person name="Asai K."/>
            <person name="Sano M."/>
            <person name="Tanaka T."/>
            <person name="Kumagai T."/>
            <person name="Terai G."/>
            <person name="Kusumoto K."/>
            <person name="Arima T."/>
            <person name="Akita O."/>
            <person name="Kashiwagi Y."/>
            <person name="Abe K."/>
            <person name="Gomi K."/>
            <person name="Horiuchi H."/>
            <person name="Kitamoto K."/>
            <person name="Kobayashi T."/>
            <person name="Takeuchi M."/>
            <person name="Denning D.W."/>
            <person name="Galagan J.E."/>
            <person name="Nierman W.C."/>
            <person name="Yu J."/>
            <person name="Archer D.B."/>
            <person name="Bennett J.W."/>
            <person name="Bhatnagar D."/>
            <person name="Cleveland T.E."/>
            <person name="Fedorova N.D."/>
            <person name="Gotoh O."/>
            <person name="Horikawa H."/>
            <person name="Hosoyama A."/>
            <person name="Ichinomiya M."/>
            <person name="Igarashi R."/>
            <person name="Iwashita K."/>
            <person name="Juvvadi P.R."/>
            <person name="Kato M."/>
            <person name="Kato Y."/>
            <person name="Kin T."/>
            <person name="Kokubun A."/>
            <person name="Maeda H."/>
            <person name="Maeyama N."/>
            <person name="Maruyama J."/>
            <person name="Nagasaki H."/>
            <person name="Nakajima T."/>
            <person name="Oda K."/>
            <person name="Okada K."/>
            <person name="Paulsen I."/>
            <person name="Sakamoto K."/>
            <person name="Sawano T."/>
            <person name="Takahashi M."/>
            <person name="Takase K."/>
            <person name="Terabayashi Y."/>
            <person name="Wortman J.R."/>
            <person name="Yamada O."/>
            <person name="Yamagata Y."/>
            <person name="Anazawa H."/>
            <person name="Hata Y."/>
            <person name="Koide Y."/>
            <person name="Komori T."/>
            <person name="Koyama Y."/>
            <person name="Minetoki T."/>
            <person name="Suharnan S."/>
            <person name="Tanaka A."/>
            <person name="Isono K."/>
            <person name="Kuhara S."/>
            <person name="Ogasawara N."/>
            <person name="Kikuchi H."/>
        </authorList>
    </citation>
    <scope>NUCLEOTIDE SEQUENCE [LARGE SCALE GENOMIC DNA]</scope>
    <source>
        <strain>ATCC 42149 / RIB 40</strain>
    </source>
</reference>
<reference key="2">
    <citation type="journal article" date="2019" name="Biosci. Biotechnol. Biochem.">
        <title>Identification of a gene cluster for biosynthesis of the sesquiterpene antibiotic, heptelidic acid, in Aspergillus oryzae.</title>
        <authorList>
            <person name="Shinohara Y."/>
            <person name="Nishimura I."/>
            <person name="Koyama Y."/>
        </authorList>
    </citation>
    <scope>FUNCTION</scope>
    <scope>INDUCTION</scope>
    <scope>DISRUPTION PHENOTYPE</scope>
    <scope>PATHWAY</scope>
</reference>
<gene>
    <name evidence="4" type="primary">hepA</name>
    <name type="ORF">AO090011000408</name>
</gene>
<dbReference type="EC" id="4.2.3.-" evidence="6"/>
<dbReference type="EMBL" id="BA000055">
    <property type="protein sequence ID" value="BAE64913.1"/>
    <property type="molecule type" value="Genomic_DNA"/>
</dbReference>
<dbReference type="RefSeq" id="XP_001826046.2">
    <property type="nucleotide sequence ID" value="XM_001825994.2"/>
</dbReference>
<dbReference type="SMR" id="Q2U0K2"/>
<dbReference type="EnsemblFungi" id="BAE64913">
    <property type="protein sequence ID" value="BAE64913"/>
    <property type="gene ID" value="AO090011000408"/>
</dbReference>
<dbReference type="GeneID" id="5998149"/>
<dbReference type="KEGG" id="aor:AO090011000408"/>
<dbReference type="HOGENOM" id="CLU_1917780_0_0_1"/>
<dbReference type="Proteomes" id="UP000006564">
    <property type="component" value="Chromosome 7"/>
</dbReference>
<dbReference type="GO" id="GO:0046872">
    <property type="term" value="F:metal ion binding"/>
    <property type="evidence" value="ECO:0007669"/>
    <property type="project" value="UniProtKB-KW"/>
</dbReference>
<dbReference type="GO" id="GO:0010333">
    <property type="term" value="F:terpene synthase activity"/>
    <property type="evidence" value="ECO:0007669"/>
    <property type="project" value="InterPro"/>
</dbReference>
<dbReference type="GO" id="GO:0008299">
    <property type="term" value="P:isoprenoid biosynthetic process"/>
    <property type="evidence" value="ECO:0007669"/>
    <property type="project" value="UniProtKB-ARBA"/>
</dbReference>
<dbReference type="Gene3D" id="1.10.600.10">
    <property type="entry name" value="Farnesyl Diphosphate Synthase"/>
    <property type="match status" value="1"/>
</dbReference>
<dbReference type="InterPro" id="IPR008949">
    <property type="entry name" value="Isoprenoid_synthase_dom_sf"/>
</dbReference>
<dbReference type="InterPro" id="IPR034686">
    <property type="entry name" value="Terpene_cyclase-like_2"/>
</dbReference>
<dbReference type="PANTHER" id="PTHR35201:SF4">
    <property type="entry name" value="BETA-PINACENE SYNTHASE-RELATED"/>
    <property type="match status" value="1"/>
</dbReference>
<dbReference type="PANTHER" id="PTHR35201">
    <property type="entry name" value="TERPENE SYNTHASE"/>
    <property type="match status" value="1"/>
</dbReference>
<dbReference type="Pfam" id="PF19086">
    <property type="entry name" value="Terpene_syn_C_2"/>
    <property type="match status" value="1"/>
</dbReference>
<dbReference type="SFLD" id="SFLDS00005">
    <property type="entry name" value="Isoprenoid_Synthase_Type_I"/>
    <property type="match status" value="1"/>
</dbReference>
<dbReference type="SFLD" id="SFLDG01020">
    <property type="entry name" value="Terpene_Cyclase_Like_2"/>
    <property type="match status" value="1"/>
</dbReference>
<dbReference type="SUPFAM" id="SSF48576">
    <property type="entry name" value="Terpenoid synthases"/>
    <property type="match status" value="1"/>
</dbReference>
<evidence type="ECO:0000250" key="1">
    <source>
        <dbReference type="UniProtKB" id="Q6WP50"/>
    </source>
</evidence>
<evidence type="ECO:0000250" key="2">
    <source>
        <dbReference type="UniProtKB" id="Q9UR08"/>
    </source>
</evidence>
<evidence type="ECO:0000269" key="3">
    <source>
    </source>
</evidence>
<evidence type="ECO:0000303" key="4">
    <source>
    </source>
</evidence>
<evidence type="ECO:0000305" key="5"/>
<evidence type="ECO:0000305" key="6">
    <source>
    </source>
</evidence>
<name>HEPA_ASPOR</name>
<feature type="chain" id="PRO_5005362042" description="Sesquiterpene cyclase hepA">
    <location>
        <begin position="1"/>
        <end position="369"/>
    </location>
</feature>
<feature type="short sequence motif" description="DDXXD motif" evidence="1">
    <location>
        <begin position="100"/>
        <end position="104"/>
    </location>
</feature>
<feature type="short sequence motif" description="(N,D)D(L,I,V)X(S,T)XXXE motif" evidence="5">
    <location>
        <begin position="255"/>
        <end position="262"/>
    </location>
</feature>
<feature type="binding site" evidence="2">
    <location>
        <position position="100"/>
    </location>
    <ligand>
        <name>Mg(2+)</name>
        <dbReference type="ChEBI" id="CHEBI:18420"/>
        <label>1</label>
    </ligand>
</feature>
<feature type="binding site" evidence="2">
    <location>
        <position position="100"/>
    </location>
    <ligand>
        <name>Mg(2+)</name>
        <dbReference type="ChEBI" id="CHEBI:18420"/>
        <label>2</label>
    </ligand>
</feature>
<feature type="binding site" evidence="2">
    <location>
        <position position="248"/>
    </location>
    <ligand>
        <name>Mg(2+)</name>
        <dbReference type="ChEBI" id="CHEBI:18420"/>
        <label>3</label>
    </ligand>
</feature>
<feature type="binding site" evidence="2">
    <location>
        <position position="252"/>
    </location>
    <ligand>
        <name>Mg(2+)</name>
        <dbReference type="ChEBI" id="CHEBI:18420"/>
        <label>3</label>
    </ligand>
</feature>
<feature type="binding site" evidence="2">
    <location>
        <position position="256"/>
    </location>
    <ligand>
        <name>Mg(2+)</name>
        <dbReference type="ChEBI" id="CHEBI:18420"/>
        <label>3</label>
    </ligand>
</feature>
<proteinExistence type="evidence at transcript level"/>
<protein>
    <recommendedName>
        <fullName evidence="4">Sesquiterpene cyclase hepA</fullName>
        <ecNumber evidence="6">4.2.3.-</ecNumber>
    </recommendedName>
    <alternativeName>
        <fullName evidence="4">Heptelidic acid biosynthesis cluster protein A</fullName>
    </alternativeName>
</protein>
<organism>
    <name type="scientific">Aspergillus oryzae (strain ATCC 42149 / RIB 40)</name>
    <name type="common">Yellow koji mold</name>
    <dbReference type="NCBI Taxonomy" id="510516"/>
    <lineage>
        <taxon>Eukaryota</taxon>
        <taxon>Fungi</taxon>
        <taxon>Dikarya</taxon>
        <taxon>Ascomycota</taxon>
        <taxon>Pezizomycotina</taxon>
        <taxon>Eurotiomycetes</taxon>
        <taxon>Eurotiomycetidae</taxon>
        <taxon>Eurotiales</taxon>
        <taxon>Aspergillaceae</taxon>
        <taxon>Aspergillus</taxon>
        <taxon>Aspergillus subgen. Circumdati</taxon>
    </lineage>
</organism>
<keyword id="KW-0456">Lyase</keyword>
<keyword id="KW-0460">Magnesium</keyword>
<keyword id="KW-0479">Metal-binding</keyword>
<keyword id="KW-1185">Reference proteome</keyword>